<sequence>MVALLLFPMLLQLLSPTCAQTQKNITLGSTLAPQGPASSWLSPSGDFAFGFRPVEGNTSFYLIAVWFNKISDKTVVWYAKNTDQDPSIVEVPSDSFLQLTNDGALSLKDRSGQEGWNPQVTGVAYASMRDTGNFVLLGADGTTKWQTFDMPSDTILPTQVIPCNKTRNKSLRARLDIDDYSSGRFLLDVQTDGNLALYLVAVPSGSKYQQYWSTDTTGNGSELVFSETGKVYFALTDGTQINISSDAGIGSMADYFHRATLDPDGVFRQYVYPKKANAGILGGETWTALSMQPQNICHAIVSDVGSGVCGFNSYCTFDGTRNQIASCQCPPWYKFFDEQKKYKGCKQDFQPHSCDLEEATALAQFELRPIYGVDWPLSDYEKYEPIGQDDCGRLCVIECFCAMAVYNQSTSTCWKKKLPLSNGNMADYVQRTVLLKVPSSNSSQFMISTSSNKWKRNRKHWVLGSSLILGTSILVNFALISIFLFGTYCRITTKKNIPLSQASSKSQLPLKTFTYKELEKATAGFHEILGAGASGVVYKGQLEDELKTNIAVKTIHKLQPETEKEFMVEVETIGQTFHKNLVRLLGFCNERAERLLVYEFMTNGPLNRLLFDNSRPHWNTRVHIALGVARGFLYLHDECSKQIIHCDIKPQNILLDDNLVAKISDFGLAKLLLTNQTRTKTGIRGTRGYVAPEWFKNIGISTKVDVYSFGVILLELVCCRRNVELEVVDEEQTIVTYWANDCYRSGRIDLLVEGDDEAIYDIKKVERFVTVALWCLQEDPSMRPNMLKVTQMLDGAVAIPSPPDPCSFISSLP</sequence>
<gene>
    <name evidence="11" type="primary">LECRK1</name>
    <name evidence="10" type="synonym">LECRK</name>
    <name evidence="13" type="ORF">OsI_14840</name>
</gene>
<protein>
    <recommendedName>
        <fullName evidence="12">G-type lectin S-receptor-like serine/threonine-protein kinase LECRK1</fullName>
        <shortName evidence="11">OsLecRK1</shortName>
        <ecNumber evidence="12">2.7.11.1</ecNumber>
    </recommendedName>
    <alternativeName>
        <fullName evidence="12">OsRLCK134</fullName>
    </alternativeName>
</protein>
<organism>
    <name type="scientific">Oryza sativa subsp. indica</name>
    <name type="common">Rice</name>
    <dbReference type="NCBI Taxonomy" id="39946"/>
    <lineage>
        <taxon>Eukaryota</taxon>
        <taxon>Viridiplantae</taxon>
        <taxon>Streptophyta</taxon>
        <taxon>Embryophyta</taxon>
        <taxon>Tracheophyta</taxon>
        <taxon>Spermatophyta</taxon>
        <taxon>Magnoliopsida</taxon>
        <taxon>Liliopsida</taxon>
        <taxon>Poales</taxon>
        <taxon>Poaceae</taxon>
        <taxon>BOP clade</taxon>
        <taxon>Oryzoideae</taxon>
        <taxon>Oryzeae</taxon>
        <taxon>Oryzinae</taxon>
        <taxon>Oryza</taxon>
        <taxon>Oryza sativa</taxon>
    </lineage>
</organism>
<dbReference type="EC" id="2.7.11.1" evidence="12"/>
<dbReference type="EMBL" id="KC131131">
    <property type="protein sequence ID" value="AGT37611.1"/>
    <property type="status" value="ALT_SEQ"/>
    <property type="molecule type" value="mRNA"/>
</dbReference>
<dbReference type="EMBL" id="KF748957">
    <property type="protein sequence ID" value="AIE56222.1"/>
    <property type="molecule type" value="Genomic_DNA"/>
</dbReference>
<dbReference type="EMBL" id="KF748958">
    <property type="protein sequence ID" value="AIE56223.1"/>
    <property type="molecule type" value="Genomic_DNA"/>
</dbReference>
<dbReference type="EMBL" id="KF748959">
    <property type="protein sequence ID" value="AIE56224.1"/>
    <property type="molecule type" value="Genomic_DNA"/>
</dbReference>
<dbReference type="EMBL" id="KF748960">
    <property type="protein sequence ID" value="AIE56225.1"/>
    <property type="molecule type" value="Genomic_DNA"/>
</dbReference>
<dbReference type="EMBL" id="KF748961">
    <property type="protein sequence ID" value="AIE56226.1"/>
    <property type="molecule type" value="Genomic_DNA"/>
</dbReference>
<dbReference type="EMBL" id="KF748962">
    <property type="protein sequence ID" value="AIE56227.1"/>
    <property type="molecule type" value="Genomic_DNA"/>
</dbReference>
<dbReference type="EMBL" id="KF748963">
    <property type="protein sequence ID" value="AIE56228.1"/>
    <property type="molecule type" value="Genomic_DNA"/>
</dbReference>
<dbReference type="EMBL" id="CM000129">
    <property type="protein sequence ID" value="EAY93041.1"/>
    <property type="status" value="ALT_SEQ"/>
    <property type="molecule type" value="Genomic_DNA"/>
</dbReference>
<dbReference type="SMR" id="A0A075F7E9"/>
<dbReference type="STRING" id="39946.A0A075F7E9"/>
<dbReference type="GlyCosmos" id="A0A075F7E9">
    <property type="glycosylation" value="8 sites, No reported glycans"/>
</dbReference>
<dbReference type="Proteomes" id="UP000007015">
    <property type="component" value="Chromosome 4"/>
</dbReference>
<dbReference type="GO" id="GO:0016020">
    <property type="term" value="C:membrane"/>
    <property type="evidence" value="ECO:0007669"/>
    <property type="project" value="UniProtKB-SubCell"/>
</dbReference>
<dbReference type="GO" id="GO:0005524">
    <property type="term" value="F:ATP binding"/>
    <property type="evidence" value="ECO:0007669"/>
    <property type="project" value="UniProtKB-KW"/>
</dbReference>
<dbReference type="GO" id="GO:0030246">
    <property type="term" value="F:carbohydrate binding"/>
    <property type="evidence" value="ECO:0007669"/>
    <property type="project" value="UniProtKB-KW"/>
</dbReference>
<dbReference type="GO" id="GO:0106310">
    <property type="term" value="F:protein serine kinase activity"/>
    <property type="evidence" value="ECO:0007669"/>
    <property type="project" value="RHEA"/>
</dbReference>
<dbReference type="GO" id="GO:0004674">
    <property type="term" value="F:protein serine/threonine kinase activity"/>
    <property type="evidence" value="ECO:0007669"/>
    <property type="project" value="UniProtKB-KW"/>
</dbReference>
<dbReference type="GO" id="GO:0006952">
    <property type="term" value="P:defense response"/>
    <property type="evidence" value="ECO:0007669"/>
    <property type="project" value="UniProtKB-KW"/>
</dbReference>
<dbReference type="GO" id="GO:0051707">
    <property type="term" value="P:response to other organism"/>
    <property type="evidence" value="ECO:0007669"/>
    <property type="project" value="UniProtKB-ARBA"/>
</dbReference>
<dbReference type="FunFam" id="1.10.510.10:FF:000237">
    <property type="entry name" value="G-type lectin S-receptor-like serine/threonine-protein kinase"/>
    <property type="match status" value="1"/>
</dbReference>
<dbReference type="FunFam" id="2.90.10.10:FF:000013">
    <property type="entry name" value="G-type lectin S-receptor-like serine/threonine-protein kinase LECRK1"/>
    <property type="match status" value="1"/>
</dbReference>
<dbReference type="FunFam" id="2.90.10.10:FF:000031">
    <property type="entry name" value="G-type lectin S-receptor-like serine/threonine-protein kinase LECRK1"/>
    <property type="match status" value="1"/>
</dbReference>
<dbReference type="FunFam" id="3.30.200.20:FF:000059">
    <property type="entry name" value="S-receptor-like serine/threonine-protein kinase"/>
    <property type="match status" value="1"/>
</dbReference>
<dbReference type="Gene3D" id="2.90.10.10">
    <property type="entry name" value="Bulb-type lectin domain"/>
    <property type="match status" value="2"/>
</dbReference>
<dbReference type="Gene3D" id="3.30.200.20">
    <property type="entry name" value="Phosphorylase Kinase, domain 1"/>
    <property type="match status" value="1"/>
</dbReference>
<dbReference type="Gene3D" id="1.10.510.10">
    <property type="entry name" value="Transferase(Phosphotransferase) domain 1"/>
    <property type="match status" value="1"/>
</dbReference>
<dbReference type="InterPro" id="IPR001480">
    <property type="entry name" value="Bulb-type_lectin_dom"/>
</dbReference>
<dbReference type="InterPro" id="IPR036426">
    <property type="entry name" value="Bulb-type_lectin_dom_sf"/>
</dbReference>
<dbReference type="InterPro" id="IPR051343">
    <property type="entry name" value="G-type_lectin_kinases/EP1-like"/>
</dbReference>
<dbReference type="InterPro" id="IPR011009">
    <property type="entry name" value="Kinase-like_dom_sf"/>
</dbReference>
<dbReference type="InterPro" id="IPR000719">
    <property type="entry name" value="Prot_kinase_dom"/>
</dbReference>
<dbReference type="InterPro" id="IPR017441">
    <property type="entry name" value="Protein_kinase_ATP_BS"/>
</dbReference>
<dbReference type="InterPro" id="IPR008271">
    <property type="entry name" value="Ser/Thr_kinase_AS"/>
</dbReference>
<dbReference type="InterPro" id="IPR024171">
    <property type="entry name" value="SRK-like_kinase"/>
</dbReference>
<dbReference type="PANTHER" id="PTHR47976">
    <property type="entry name" value="G-TYPE LECTIN S-RECEPTOR-LIKE SERINE/THREONINE-PROTEIN KINASE SD2-5"/>
    <property type="match status" value="1"/>
</dbReference>
<dbReference type="PANTHER" id="PTHR47976:SF108">
    <property type="entry name" value="G-TYPE LECTIN S-RECEPTOR-LIKE SERINE_THREONINE-PROTEIN KINASE LECRK1"/>
    <property type="match status" value="1"/>
</dbReference>
<dbReference type="Pfam" id="PF01453">
    <property type="entry name" value="B_lectin"/>
    <property type="match status" value="1"/>
</dbReference>
<dbReference type="Pfam" id="PF00069">
    <property type="entry name" value="Pkinase"/>
    <property type="match status" value="1"/>
</dbReference>
<dbReference type="PIRSF" id="PIRSF000641">
    <property type="entry name" value="SRK"/>
    <property type="match status" value="1"/>
</dbReference>
<dbReference type="SMART" id="SM00108">
    <property type="entry name" value="B_lectin"/>
    <property type="match status" value="1"/>
</dbReference>
<dbReference type="SMART" id="SM00220">
    <property type="entry name" value="S_TKc"/>
    <property type="match status" value="1"/>
</dbReference>
<dbReference type="SUPFAM" id="SSF51110">
    <property type="entry name" value="alpha-D-mannose-specific plant lectins"/>
    <property type="match status" value="1"/>
</dbReference>
<dbReference type="SUPFAM" id="SSF56112">
    <property type="entry name" value="Protein kinase-like (PK-like)"/>
    <property type="match status" value="1"/>
</dbReference>
<dbReference type="PROSITE" id="PS50927">
    <property type="entry name" value="BULB_LECTIN"/>
    <property type="match status" value="1"/>
</dbReference>
<dbReference type="PROSITE" id="PS00107">
    <property type="entry name" value="PROTEIN_KINASE_ATP"/>
    <property type="match status" value="1"/>
</dbReference>
<dbReference type="PROSITE" id="PS50011">
    <property type="entry name" value="PROTEIN_KINASE_DOM"/>
    <property type="match status" value="1"/>
</dbReference>
<dbReference type="PROSITE" id="PS00108">
    <property type="entry name" value="PROTEIN_KINASE_ST"/>
    <property type="match status" value="1"/>
</dbReference>
<keyword id="KW-0067">ATP-binding</keyword>
<keyword id="KW-1015">Disulfide bond</keyword>
<keyword id="KW-0245">EGF-like domain</keyword>
<keyword id="KW-0325">Glycoprotein</keyword>
<keyword id="KW-0418">Kinase</keyword>
<keyword id="KW-0430">Lectin</keyword>
<keyword id="KW-0472">Membrane</keyword>
<keyword id="KW-0547">Nucleotide-binding</keyword>
<keyword id="KW-0611">Plant defense</keyword>
<keyword id="KW-0675">Receptor</keyword>
<keyword id="KW-1185">Reference proteome</keyword>
<keyword id="KW-0723">Serine/threonine-protein kinase</keyword>
<keyword id="KW-0732">Signal</keyword>
<keyword id="KW-0808">Transferase</keyword>
<keyword id="KW-0812">Transmembrane</keyword>
<keyword id="KW-1133">Transmembrane helix</keyword>
<evidence type="ECO:0000255" key="1"/>
<evidence type="ECO:0000255" key="2">
    <source>
        <dbReference type="PROSITE-ProRule" id="PRU00038"/>
    </source>
</evidence>
<evidence type="ECO:0000255" key="3">
    <source>
        <dbReference type="PROSITE-ProRule" id="PRU00076"/>
    </source>
</evidence>
<evidence type="ECO:0000255" key="4">
    <source>
        <dbReference type="PROSITE-ProRule" id="PRU00159"/>
    </source>
</evidence>
<evidence type="ECO:0000255" key="5">
    <source>
        <dbReference type="PROSITE-ProRule" id="PRU00315"/>
    </source>
</evidence>
<evidence type="ECO:0000255" key="6">
    <source>
        <dbReference type="PROSITE-ProRule" id="PRU00498"/>
    </source>
</evidence>
<evidence type="ECO:0000269" key="7">
    <source>
    </source>
</evidence>
<evidence type="ECO:0000269" key="8">
    <source>
    </source>
</evidence>
<evidence type="ECO:0000269" key="9">
    <source>
    </source>
</evidence>
<evidence type="ECO:0000303" key="10">
    <source>
    </source>
</evidence>
<evidence type="ECO:0000303" key="11">
    <source>
    </source>
</evidence>
<evidence type="ECO:0000305" key="12"/>
<evidence type="ECO:0000312" key="13">
    <source>
        <dbReference type="EMBL" id="EAY93041.1"/>
    </source>
</evidence>
<proteinExistence type="evidence at protein level"/>
<accession>A0A075F7E9</accession>
<accession>A0A075F413</accession>
<accession>A2XQD1</accession>
<accession>T1SG84</accession>
<name>LERK1_ORYSI</name>
<feature type="signal peptide" evidence="1">
    <location>
        <begin position="1"/>
        <end position="19"/>
    </location>
</feature>
<feature type="chain" id="PRO_0000436166" description="G-type lectin S-receptor-like serine/threonine-protein kinase LECRK1" evidence="1">
    <location>
        <begin position="20"/>
        <end position="813"/>
    </location>
</feature>
<feature type="topological domain" description="Extracellular" evidence="12">
    <location>
        <begin position="20"/>
        <end position="466"/>
    </location>
</feature>
<feature type="transmembrane region" description="Helical" evidence="1">
    <location>
        <begin position="467"/>
        <end position="487"/>
    </location>
</feature>
<feature type="topological domain" description="Cytoplasmic" evidence="12">
    <location>
        <begin position="488"/>
        <end position="813"/>
    </location>
</feature>
<feature type="domain" description="Bulb-type lectin" evidence="2">
    <location>
        <begin position="22"/>
        <end position="149"/>
    </location>
</feature>
<feature type="domain" description="EGF-like; atypical" evidence="12">
    <location>
        <begin position="293"/>
        <end position="346"/>
    </location>
</feature>
<feature type="domain" description="PAN" evidence="5">
    <location>
        <begin position="354"/>
        <end position="433"/>
    </location>
</feature>
<feature type="domain" description="Protein kinase" evidence="4">
    <location>
        <begin position="523"/>
        <end position="797"/>
    </location>
</feature>
<feature type="active site" description="Proton acceptor" evidence="4">
    <location>
        <position position="647"/>
    </location>
</feature>
<feature type="binding site" evidence="4">
    <location>
        <begin position="529"/>
        <end position="537"/>
    </location>
    <ligand>
        <name>ATP</name>
        <dbReference type="ChEBI" id="CHEBI:30616"/>
    </ligand>
</feature>
<feature type="binding site" evidence="4">
    <location>
        <position position="553"/>
    </location>
    <ligand>
        <name>ATP</name>
        <dbReference type="ChEBI" id="CHEBI:30616"/>
    </ligand>
</feature>
<feature type="glycosylation site" description="N-linked (GlcNAc...) asparagine" evidence="6">
    <location>
        <position position="24"/>
    </location>
</feature>
<feature type="glycosylation site" description="N-linked (GlcNAc...) asparagine" evidence="6">
    <location>
        <position position="57"/>
    </location>
</feature>
<feature type="glycosylation site" description="N-linked (GlcNAc...) asparagine" evidence="6">
    <location>
        <position position="164"/>
    </location>
</feature>
<feature type="glycosylation site" description="N-linked (GlcNAc...) asparagine" evidence="6">
    <location>
        <position position="168"/>
    </location>
</feature>
<feature type="glycosylation site" description="N-linked (GlcNAc...) asparagine" evidence="6">
    <location>
        <position position="219"/>
    </location>
</feature>
<feature type="glycosylation site" description="N-linked (GlcNAc...) asparagine" evidence="6">
    <location>
        <position position="242"/>
    </location>
</feature>
<feature type="glycosylation site" description="N-linked (GlcNAc...) asparagine" evidence="6">
    <location>
        <position position="407"/>
    </location>
</feature>
<feature type="glycosylation site" description="N-linked (GlcNAc...) asparagine" evidence="6">
    <location>
        <position position="441"/>
    </location>
</feature>
<feature type="disulfide bond" evidence="3">
    <location>
        <begin position="297"/>
        <end position="315"/>
    </location>
</feature>
<feature type="disulfide bond" evidence="3">
    <location>
        <begin position="309"/>
        <end position="327"/>
    </location>
</feature>
<feature type="disulfide bond" evidence="3">
    <location>
        <begin position="329"/>
        <end position="345"/>
    </location>
</feature>
<feature type="disulfide bond" evidence="5">
    <location>
        <begin position="391"/>
        <end position="413"/>
    </location>
</feature>
<feature type="disulfide bond" evidence="5">
    <location>
        <begin position="395"/>
        <end position="401"/>
    </location>
</feature>
<feature type="sequence conflict" description="In Ref. 1; AGT37611 and 2; AIE56222/AIE56223/AIE56224/AIE56225/AIE56226/AIE56227/AIE56228." evidence="12" ref="1 2">
    <original>E</original>
    <variation>K</variation>
    <location>
        <position position="90"/>
    </location>
</feature>
<feature type="sequence conflict" description="In Ref. 1; AGT37611 and 2; AIE56222/AIE56223/AIE56224/AIE56225/AIE56226/AIE56227/AIE56228." evidence="12" ref="1 2">
    <original>R</original>
    <variation>C</variation>
    <location>
        <position position="129"/>
    </location>
</feature>
<feature type="sequence conflict" description="In Ref. 1; AGT37611." evidence="12" ref="1">
    <original>E</original>
    <variation>G</variation>
    <location>
        <position position="384"/>
    </location>
</feature>
<feature type="sequence conflict" description="In Ref. 1; AGT37611 and 2; AIE56222/AIE56223/AIE56224/AIE56225/AIE56226/AIE56227/AIE56228." evidence="12" ref="1 2">
    <original>D</original>
    <variation>N</variation>
    <location>
        <position position="761"/>
    </location>
</feature>
<comment type="function">
    <text evidence="7 9">Involved in innate immunity. Required for the expression of defense-related genes PR1A, LOX2 and CHS1 upon biotic stresses. Required for basal resistance to the fungal blast (M.grisea), bacterial blight (O.oryzae pv. oryzae, Xoo) and the herbivorous insect brown planthopper (N.lugens, BPH). May be involved in several defense signaling pathways. Involved in the promotion of seed germination. Required for the expression of alpha-amylase genes during seed germination (PubMed:15685292). Involved in resistance against the brown planthopper (BPH). Member of the BPH3 (BPH resistance locus 3) cluster which contains LECRK1, LECRK2 and LECRK3 (PubMed:25485617).</text>
</comment>
<comment type="catalytic activity">
    <reaction evidence="12">
        <text>L-seryl-[protein] + ATP = O-phospho-L-seryl-[protein] + ADP + H(+)</text>
        <dbReference type="Rhea" id="RHEA:17989"/>
        <dbReference type="Rhea" id="RHEA-COMP:9863"/>
        <dbReference type="Rhea" id="RHEA-COMP:11604"/>
        <dbReference type="ChEBI" id="CHEBI:15378"/>
        <dbReference type="ChEBI" id="CHEBI:29999"/>
        <dbReference type="ChEBI" id="CHEBI:30616"/>
        <dbReference type="ChEBI" id="CHEBI:83421"/>
        <dbReference type="ChEBI" id="CHEBI:456216"/>
        <dbReference type="EC" id="2.7.11.1"/>
    </reaction>
</comment>
<comment type="catalytic activity">
    <reaction evidence="12">
        <text>L-threonyl-[protein] + ATP = O-phospho-L-threonyl-[protein] + ADP + H(+)</text>
        <dbReference type="Rhea" id="RHEA:46608"/>
        <dbReference type="Rhea" id="RHEA-COMP:11060"/>
        <dbReference type="Rhea" id="RHEA-COMP:11605"/>
        <dbReference type="ChEBI" id="CHEBI:15378"/>
        <dbReference type="ChEBI" id="CHEBI:30013"/>
        <dbReference type="ChEBI" id="CHEBI:30616"/>
        <dbReference type="ChEBI" id="CHEBI:61977"/>
        <dbReference type="ChEBI" id="CHEBI:456216"/>
        <dbReference type="EC" id="2.7.11.1"/>
    </reaction>
</comment>
<comment type="subunit">
    <text evidence="8">Interacts (via kinase domain) with ADF4.</text>
</comment>
<comment type="subcellular location">
    <subcellularLocation>
        <location evidence="1">Membrane</location>
        <topology evidence="1">Single-pass type I membrane protein</topology>
    </subcellularLocation>
</comment>
<comment type="tissue specificity">
    <text evidence="8">Expressed in plumules, radicles and panicles.</text>
</comment>
<comment type="induction">
    <text evidence="8">Induced by infection with the fungal blast (M.grisea) and bacterial blight (X.oryzae pv. oryzae, Xoo).</text>
</comment>
<comment type="miscellaneous">
    <text evidence="8">Seeds silencing LECRK1 show decreased germination rates due to decreased alpha-amylase activity during seed germination. Plants silencing LECRK1 have increased susceptibility to infection by the fungal blast (M.grisea), bacterial blight (X.oryzae pv. oryzae, Xoo) and the herbivorous insect brown planthopper (N.lugens, BPH). Plants silencing LECRK1 display reduced induction of the defense-related genes PR1A, LOX2 and CHS1 after exposure to biotic stresses.</text>
</comment>
<comment type="similarity">
    <text evidence="4">Belongs to the protein kinase superfamily. Ser/Thr protein kinase family.</text>
</comment>
<comment type="sequence caution" evidence="12">
    <conflict type="miscellaneous discrepancy">
        <sequence resource="EMBL-CDS" id="AGT37611"/>
    </conflict>
    <text>Sequencing errors.</text>
</comment>
<comment type="sequence caution" evidence="12">
    <conflict type="erroneous gene model prediction">
        <sequence resource="EMBL-CDS" id="EAY93041"/>
    </conflict>
</comment>
<reference key="1">
    <citation type="journal article" date="2013" name="Plant J.">
        <title>A rice lectin receptor-like kinase that is involved in innate immune responses also contributes to seed germination.</title>
        <authorList>
            <person name="Cheng X."/>
            <person name="Wu Y."/>
            <person name="Guo J."/>
            <person name="Du B."/>
            <person name="Chen R."/>
            <person name="Zhu L."/>
            <person name="He G."/>
        </authorList>
    </citation>
    <scope>NUCLEOTIDE SEQUENCE [MRNA]</scope>
    <scope>FUNCTION</scope>
    <scope>INTERACTION WITH ADF4</scope>
    <scope>TISSUE SPECIFICITY</scope>
    <scope>INDUCTION</scope>
</reference>
<reference key="2">
    <citation type="journal article" date="2015" name="Nat. Biotechnol.">
        <title>A gene cluster encoding lectin receptor kinases confers broad-spectrum and durable insect resistance in rice.</title>
        <authorList>
            <person name="Liu Y."/>
            <person name="Wu H."/>
            <person name="Chen H."/>
            <person name="Liu Y."/>
            <person name="He J."/>
            <person name="Kang H."/>
            <person name="Sun Z."/>
            <person name="Pan G."/>
            <person name="Wang Q."/>
            <person name="Hu J."/>
            <person name="Zhou F."/>
            <person name="Zhou K."/>
            <person name="Zheng X."/>
            <person name="Ren Y."/>
            <person name="Chen L."/>
            <person name="Wang Y."/>
            <person name="Zhao Z."/>
            <person name="Lin Q."/>
            <person name="Wu F."/>
            <person name="Zhang X."/>
            <person name="Guo X."/>
            <person name="Cheng X."/>
            <person name="Jiang L."/>
            <person name="Wu C."/>
            <person name="Wang H."/>
            <person name="Wan J."/>
        </authorList>
    </citation>
    <scope>NUCLEOTIDE SEQUENCE [GENOMIC DNA]</scope>
    <scope>FUNCTION</scope>
</reference>
<reference key="3">
    <citation type="journal article" date="2005" name="PLoS Biol.">
        <title>The genomes of Oryza sativa: a history of duplications.</title>
        <authorList>
            <person name="Yu J."/>
            <person name="Wang J."/>
            <person name="Lin W."/>
            <person name="Li S."/>
            <person name="Li H."/>
            <person name="Zhou J."/>
            <person name="Ni P."/>
            <person name="Dong W."/>
            <person name="Hu S."/>
            <person name="Zeng C."/>
            <person name="Zhang J."/>
            <person name="Zhang Y."/>
            <person name="Li R."/>
            <person name="Xu Z."/>
            <person name="Li S."/>
            <person name="Li X."/>
            <person name="Zheng H."/>
            <person name="Cong L."/>
            <person name="Lin L."/>
            <person name="Yin J."/>
            <person name="Geng J."/>
            <person name="Li G."/>
            <person name="Shi J."/>
            <person name="Liu J."/>
            <person name="Lv H."/>
            <person name="Li J."/>
            <person name="Wang J."/>
            <person name="Deng Y."/>
            <person name="Ran L."/>
            <person name="Shi X."/>
            <person name="Wang X."/>
            <person name="Wu Q."/>
            <person name="Li C."/>
            <person name="Ren X."/>
            <person name="Wang J."/>
            <person name="Wang X."/>
            <person name="Li D."/>
            <person name="Liu D."/>
            <person name="Zhang X."/>
            <person name="Ji Z."/>
            <person name="Zhao W."/>
            <person name="Sun Y."/>
            <person name="Zhang Z."/>
            <person name="Bao J."/>
            <person name="Han Y."/>
            <person name="Dong L."/>
            <person name="Ji J."/>
            <person name="Chen P."/>
            <person name="Wu S."/>
            <person name="Liu J."/>
            <person name="Xiao Y."/>
            <person name="Bu D."/>
            <person name="Tan J."/>
            <person name="Yang L."/>
            <person name="Ye C."/>
            <person name="Zhang J."/>
            <person name="Xu J."/>
            <person name="Zhou Y."/>
            <person name="Yu Y."/>
            <person name="Zhang B."/>
            <person name="Zhuang S."/>
            <person name="Wei H."/>
            <person name="Liu B."/>
            <person name="Lei M."/>
            <person name="Yu H."/>
            <person name="Li Y."/>
            <person name="Xu H."/>
            <person name="Wei S."/>
            <person name="He X."/>
            <person name="Fang L."/>
            <person name="Zhang Z."/>
            <person name="Zhang Y."/>
            <person name="Huang X."/>
            <person name="Su Z."/>
            <person name="Tong W."/>
            <person name="Li J."/>
            <person name="Tong Z."/>
            <person name="Li S."/>
            <person name="Ye J."/>
            <person name="Wang L."/>
            <person name="Fang L."/>
            <person name="Lei T."/>
            <person name="Chen C.-S."/>
            <person name="Chen H.-C."/>
            <person name="Xu Z."/>
            <person name="Li H."/>
            <person name="Huang H."/>
            <person name="Zhang F."/>
            <person name="Xu H."/>
            <person name="Li N."/>
            <person name="Zhao C."/>
            <person name="Li S."/>
            <person name="Dong L."/>
            <person name="Huang Y."/>
            <person name="Li L."/>
            <person name="Xi Y."/>
            <person name="Qi Q."/>
            <person name="Li W."/>
            <person name="Zhang B."/>
            <person name="Hu W."/>
            <person name="Zhang Y."/>
            <person name="Tian X."/>
            <person name="Jiao Y."/>
            <person name="Liang X."/>
            <person name="Jin J."/>
            <person name="Gao L."/>
            <person name="Zheng W."/>
            <person name="Hao B."/>
            <person name="Liu S.-M."/>
            <person name="Wang W."/>
            <person name="Yuan L."/>
            <person name="Cao M."/>
            <person name="McDermott J."/>
            <person name="Samudrala R."/>
            <person name="Wang J."/>
            <person name="Wong G.K.-S."/>
            <person name="Yang H."/>
        </authorList>
    </citation>
    <scope>NUCLEOTIDE SEQUENCE [LARGE SCALE GENOMIC DNA]</scope>
    <source>
        <strain>cv. 93-11</strain>
    </source>
</reference>